<accession>P12540</accession>
<gene>
    <name evidence="1" type="primary">IVa2</name>
</gene>
<feature type="chain" id="PRO_0000221886" description="Packaging protein 1">
    <location>
        <begin position="1"/>
        <end position="452"/>
    </location>
</feature>
<feature type="region of interest" description="Disordered" evidence="2">
    <location>
        <begin position="1"/>
        <end position="78"/>
    </location>
</feature>
<feature type="region of interest" description="DNA-binding" evidence="1">
    <location>
        <begin position="442"/>
        <end position="452"/>
    </location>
</feature>
<feature type="binding site" evidence="1">
    <location>
        <begin position="173"/>
        <end position="180"/>
    </location>
    <ligand>
        <name>ATP</name>
        <dbReference type="ChEBI" id="CHEBI:30616"/>
    </ligand>
</feature>
<feature type="sequence conflict" description="In Ref. 2." ref="2">
    <original>MLPCRST</original>
    <variation>METQ</variation>
    <location>
        <begin position="1"/>
        <end position="7"/>
    </location>
</feature>
<feature type="sequence conflict" description="In Ref. 2." ref="2">
    <original>QN</original>
    <variation>HD</variation>
    <location>
        <begin position="51"/>
        <end position="52"/>
    </location>
</feature>
<feature type="sequence conflict" description="In Ref. 2." ref="2">
    <original>FK</original>
    <variation>LQ</variation>
    <location>
        <begin position="115"/>
        <end position="116"/>
    </location>
</feature>
<organismHost>
    <name type="scientific">Homo sapiens</name>
    <name type="common">Human</name>
    <dbReference type="NCBI Taxonomy" id="9606"/>
</organismHost>
<reference key="1">
    <citation type="journal article" date="1994" name="J. Virol.">
        <title>Nucleotide sequence of human adenovirus type 12 DNA: comparative functional analysis.</title>
        <authorList>
            <person name="Sprengel J."/>
            <person name="Schmitz B."/>
            <person name="Heuss-Neitzel D."/>
            <person name="Zock C."/>
            <person name="Doerfler W."/>
        </authorList>
    </citation>
    <scope>NUCLEOTIDE SEQUENCE [LARGE SCALE GENOMIC DNA]</scope>
</reference>
<reference key="2">
    <citation type="journal article" date="1986" name="Gene">
        <title>Nucleotide sequence of the genes encoded in early region 2b of human adenovirus type 12.</title>
        <authorList>
            <person name="Shu L."/>
            <person name="Hong J.S."/>
            <person name="Wei Y.-F."/>
            <person name="Engler J.A."/>
        </authorList>
    </citation>
    <scope>NUCLEOTIDE SEQUENCE [GENOMIC DNA] OF 1-123</scope>
</reference>
<comment type="function">
    <text evidence="1">Component of the packaging machinery which encapsidates the viral DNA into preformed capsids and transcriptional activator of the viral major late promoter (MLP). Binds, along with packaging proteins 2 and 3, to the specific packaging sequence on the left end of viral genomic DNA and displays ATPase activity thereby providing the power stroke of the packaging machinery. The activity of packaging protein IVa2 is stimulated by protein 33K which acts as a terminase. May be the protein that pumps DNA into the capsid powered by ATP hydrolysis. Specifically binds to the 5'-CG-3' nucleotides of the repeats making up the packaging sequence. Component of the DEF-A and DEF-B transcription factors that bind downstream elements of the major late promoter (MLP), and stimulate transcription from the MLP after initiation of viral DNA replication. DEF-A is a heterodimer packaging proteins 1 and 2 and DEF-B is a homodimer of packaging protein 1.</text>
</comment>
<comment type="subunit">
    <text evidence="1">Homodimer. Part of a genome packaging complex composed of packaging proteins 1, 2 and 3; this complex specifically binds to the packaging sequence on the left end of viral genomic DNA and performs packaging of the viral genome. Interacts with protein 33K.</text>
</comment>
<comment type="subcellular location">
    <subcellularLocation>
        <location evidence="1">Virion</location>
    </subcellularLocation>
    <subcellularLocation>
        <location evidence="1">Host nucleus</location>
        <location evidence="1">Host nucleoplasm</location>
    </subcellularLocation>
    <subcellularLocation>
        <location evidence="1">Host nucleus</location>
        <location evidence="1">Host nucleolus</location>
    </subcellularLocation>
    <text evidence="1">Located at a unique vertex of the capsid. Present in about 6-8 copies per virion.</text>
</comment>
<comment type="induction">
    <text evidence="1">Expressed in the intermediate phase of the viral replicative cycle.</text>
</comment>
<comment type="similarity">
    <text evidence="1">Belongs to the adenoviridae packaging protein 1 family.</text>
</comment>
<name>PKG1_ADE12</name>
<evidence type="ECO:0000255" key="1">
    <source>
        <dbReference type="HAMAP-Rule" id="MF_04057"/>
    </source>
</evidence>
<evidence type="ECO:0000256" key="2">
    <source>
        <dbReference type="SAM" id="MobiDB-lite"/>
    </source>
</evidence>
<protein>
    <recommendedName>
        <fullName evidence="1">Packaging protein 1</fullName>
    </recommendedName>
    <alternativeName>
        <fullName evidence="1">Packaging protein IVa2</fullName>
    </alternativeName>
</protein>
<dbReference type="EMBL" id="X73487">
    <property type="protein sequence ID" value="CAA51881.1"/>
    <property type="molecule type" value="Genomic_DNA"/>
</dbReference>
<dbReference type="EMBL" id="M14785">
    <property type="status" value="NOT_ANNOTATED_CDS"/>
    <property type="molecule type" value="Genomic_DNA"/>
</dbReference>
<dbReference type="PIR" id="S33932">
    <property type="entry name" value="S33932"/>
</dbReference>
<dbReference type="RefSeq" id="NP_040914.1">
    <property type="nucleotide sequence ID" value="NC_001460.1"/>
</dbReference>
<dbReference type="GeneID" id="1460856"/>
<dbReference type="KEGG" id="vg:1460856"/>
<dbReference type="Proteomes" id="UP000004993">
    <property type="component" value="Genome"/>
</dbReference>
<dbReference type="GO" id="GO:0044196">
    <property type="term" value="C:host cell nucleolus"/>
    <property type="evidence" value="ECO:0007669"/>
    <property type="project" value="UniProtKB-SubCell"/>
</dbReference>
<dbReference type="GO" id="GO:0044095">
    <property type="term" value="C:host cell nucleoplasm"/>
    <property type="evidence" value="ECO:0007669"/>
    <property type="project" value="UniProtKB-SubCell"/>
</dbReference>
<dbReference type="GO" id="GO:0044423">
    <property type="term" value="C:virion component"/>
    <property type="evidence" value="ECO:0007669"/>
    <property type="project" value="UniProtKB-UniRule"/>
</dbReference>
<dbReference type="GO" id="GO:0005524">
    <property type="term" value="F:ATP binding"/>
    <property type="evidence" value="ECO:0007669"/>
    <property type="project" value="UniProtKB-UniRule"/>
</dbReference>
<dbReference type="GO" id="GO:0003677">
    <property type="term" value="F:DNA binding"/>
    <property type="evidence" value="ECO:0007669"/>
    <property type="project" value="UniProtKB-UniRule"/>
</dbReference>
<dbReference type="GO" id="GO:0006351">
    <property type="term" value="P:DNA-templated transcription"/>
    <property type="evidence" value="ECO:0007669"/>
    <property type="project" value="UniProtKB-UniRule"/>
</dbReference>
<dbReference type="GO" id="GO:0039708">
    <property type="term" value="P:nuclear capsid assembly"/>
    <property type="evidence" value="ECO:0007669"/>
    <property type="project" value="UniProtKB-UniRule"/>
</dbReference>
<dbReference type="GO" id="GO:0006355">
    <property type="term" value="P:regulation of DNA-templated transcription"/>
    <property type="evidence" value="ECO:0007669"/>
    <property type="project" value="UniProtKB-UniRule"/>
</dbReference>
<dbReference type="GO" id="GO:0098035">
    <property type="term" value="P:viral DNA genome packaging via site-specific sequence recognition"/>
    <property type="evidence" value="ECO:0007669"/>
    <property type="project" value="UniProtKB-UniRule"/>
</dbReference>
<dbReference type="GO" id="GO:0019076">
    <property type="term" value="P:viral release from host cell"/>
    <property type="evidence" value="ECO:0007669"/>
    <property type="project" value="UniProtKB-UniRule"/>
</dbReference>
<dbReference type="GO" id="GO:0019083">
    <property type="term" value="P:viral transcription"/>
    <property type="evidence" value="ECO:0007669"/>
    <property type="project" value="UniProtKB-UniRule"/>
</dbReference>
<dbReference type="HAMAP" id="MF_04057">
    <property type="entry name" value="ADV_PKG1"/>
    <property type="match status" value="1"/>
</dbReference>
<dbReference type="InterPro" id="IPR003389">
    <property type="entry name" value="Adeno_IVa2"/>
</dbReference>
<dbReference type="InterPro" id="IPR027417">
    <property type="entry name" value="P-loop_NTPase"/>
</dbReference>
<dbReference type="Pfam" id="PF02456">
    <property type="entry name" value="Adeno_IVa2"/>
    <property type="match status" value="1"/>
</dbReference>
<dbReference type="SUPFAM" id="SSF52540">
    <property type="entry name" value="P-loop containing nucleoside triphosphate hydrolases"/>
    <property type="match status" value="1"/>
</dbReference>
<keyword id="KW-0010">Activator</keyword>
<keyword id="KW-0067">ATP-binding</keyword>
<keyword id="KW-0238">DNA-binding</keyword>
<keyword id="KW-1048">Host nucleus</keyword>
<keyword id="KW-0547">Nucleotide-binding</keyword>
<keyword id="KW-0597">Phosphoprotein</keyword>
<keyword id="KW-1185">Reference proteome</keyword>
<keyword id="KW-0804">Transcription</keyword>
<keyword id="KW-0805">Transcription regulation</keyword>
<keyword id="KW-0231">Viral genome packaging</keyword>
<keyword id="KW-1188">Viral release from host cell</keyword>
<keyword id="KW-0946">Virion</keyword>
<sequence length="452" mass="51545">MLPCRSTGRRHALQHQPPQFKAHTGQRSTRSASIHRDRNNPDAHITSLEGQNPRPFGCSPPRSLQQQPAKPPQRGSLLDRDGIENITELWDRLQLLKQTLDHMPMADGLKPLKNFKSLQELLSLGGERLLGELAKQNIRVRQMMNEVAPLLHEDGSCTSLNYHLQPVIGVIYGPTGCGKSQLLRNLLSAQLVTPAPETVFFIVPQVDMIPPSEIKSWEMQICEGNYVPGPEGTIIPQSGTLCPKFVKLSYDDLTLDHNYDVSDPENIFAQAAARGPIAIIMDECMENLGSHKGVSKFFHAFPSKLHDKFPKCTGYTVFVVLHNMNPRRDLAGNIANLKIQSKLHIMSPRMHPTQLNRFINTYTKGLPLAISLLLKDIFNHHAQRCCYDWIIYNTNPEHEALQWSYLHPKDGLMPMYLNIQAHLYKILEHIHRVLNDRERWSRAYHVRKNKYQ</sequence>
<proteinExistence type="inferred from homology"/>
<organism>
    <name type="scientific">Human adenovirus A serotype 12</name>
    <name type="common">HAdV-12</name>
    <name type="synonym">Human adenovirus 12</name>
    <dbReference type="NCBI Taxonomy" id="28282"/>
    <lineage>
        <taxon>Viruses</taxon>
        <taxon>Varidnaviria</taxon>
        <taxon>Bamfordvirae</taxon>
        <taxon>Preplasmiviricota</taxon>
        <taxon>Tectiliviricetes</taxon>
        <taxon>Rowavirales</taxon>
        <taxon>Adenoviridae</taxon>
        <taxon>Mastadenovirus</taxon>
        <taxon>Human mastadenovirus A</taxon>
    </lineage>
</organism>